<keyword id="KW-0963">Cytoplasm</keyword>
<keyword id="KW-0342">GTP-binding</keyword>
<keyword id="KW-0378">Hydrolase</keyword>
<keyword id="KW-0479">Metal-binding</keyword>
<keyword id="KW-0547">Nucleotide-binding</keyword>
<keyword id="KW-0690">Ribosome biogenesis</keyword>
<keyword id="KW-0694">RNA-binding</keyword>
<keyword id="KW-0699">rRNA-binding</keyword>
<keyword id="KW-0862">Zinc</keyword>
<name>RSGA_PORG3</name>
<proteinExistence type="inferred from homology"/>
<feature type="chain" id="PRO_1000188114" description="Small ribosomal subunit biogenesis GTPase RsgA">
    <location>
        <begin position="1"/>
        <end position="315"/>
    </location>
</feature>
<feature type="domain" description="CP-type G" evidence="2">
    <location>
        <begin position="79"/>
        <end position="243"/>
    </location>
</feature>
<feature type="binding site" evidence="1">
    <location>
        <begin position="128"/>
        <end position="131"/>
    </location>
    <ligand>
        <name>GTP</name>
        <dbReference type="ChEBI" id="CHEBI:37565"/>
    </ligand>
</feature>
<feature type="binding site" evidence="1">
    <location>
        <begin position="182"/>
        <end position="190"/>
    </location>
    <ligand>
        <name>GTP</name>
        <dbReference type="ChEBI" id="CHEBI:37565"/>
    </ligand>
</feature>
<feature type="binding site" evidence="1">
    <location>
        <position position="267"/>
    </location>
    <ligand>
        <name>Zn(2+)</name>
        <dbReference type="ChEBI" id="CHEBI:29105"/>
    </ligand>
</feature>
<feature type="binding site" evidence="1">
    <location>
        <position position="272"/>
    </location>
    <ligand>
        <name>Zn(2+)</name>
        <dbReference type="ChEBI" id="CHEBI:29105"/>
    </ligand>
</feature>
<feature type="binding site" evidence="1">
    <location>
        <position position="274"/>
    </location>
    <ligand>
        <name>Zn(2+)</name>
        <dbReference type="ChEBI" id="CHEBI:29105"/>
    </ligand>
</feature>
<feature type="binding site" evidence="1">
    <location>
        <position position="280"/>
    </location>
    <ligand>
        <name>Zn(2+)</name>
        <dbReference type="ChEBI" id="CHEBI:29105"/>
    </ligand>
</feature>
<protein>
    <recommendedName>
        <fullName evidence="1">Small ribosomal subunit biogenesis GTPase RsgA</fullName>
        <ecNumber evidence="1">3.6.1.-</ecNumber>
    </recommendedName>
</protein>
<sequence>MDGVVIKNTGSQYLVRCTDGTELYCMAKGNLRLKGIRSTNPVAVGDRVEIVPASQDGQPAYIKRIHPRRNYIIRRASNLSKESHILGANLDAAVLVCTINDPVTTTVFIDRFLATAEAYRVPVILAFNKIDCYTQEDRLQLDRLSAVYTAIGYPCCHVSAITGEGLPDLKSLLDGKLTLLAGHSGVGKSSLINALIPHADLRTGAISQAHHTGMHTTTFSQMIDFPDLSPGSALIDTPGIKGFGTLEMGEYEVSHYFPEIFAASKGCRFGNCTHTHEPGCAVLEALRRGEIAESRYISYLSILEDENAERYRPEY</sequence>
<gene>
    <name evidence="1" type="primary">rsgA</name>
    <name type="ordered locus">PGN_1831</name>
</gene>
<dbReference type="EC" id="3.6.1.-" evidence="1"/>
<dbReference type="EMBL" id="AP009380">
    <property type="protein sequence ID" value="BAG34350.1"/>
    <property type="molecule type" value="Genomic_DNA"/>
</dbReference>
<dbReference type="RefSeq" id="WP_012458569.1">
    <property type="nucleotide sequence ID" value="NC_010729.1"/>
</dbReference>
<dbReference type="SMR" id="B2RLV5"/>
<dbReference type="GeneID" id="29256982"/>
<dbReference type="KEGG" id="pgn:PGN_1831"/>
<dbReference type="eggNOG" id="COG1162">
    <property type="taxonomic scope" value="Bacteria"/>
</dbReference>
<dbReference type="HOGENOM" id="CLU_033617_2_0_10"/>
<dbReference type="OrthoDB" id="9809485at2"/>
<dbReference type="BioCyc" id="PGIN431947:G1G2V-2042-MONOMER"/>
<dbReference type="Proteomes" id="UP000008842">
    <property type="component" value="Chromosome"/>
</dbReference>
<dbReference type="GO" id="GO:0005737">
    <property type="term" value="C:cytoplasm"/>
    <property type="evidence" value="ECO:0007669"/>
    <property type="project" value="UniProtKB-SubCell"/>
</dbReference>
<dbReference type="GO" id="GO:0005525">
    <property type="term" value="F:GTP binding"/>
    <property type="evidence" value="ECO:0007669"/>
    <property type="project" value="UniProtKB-UniRule"/>
</dbReference>
<dbReference type="GO" id="GO:0003924">
    <property type="term" value="F:GTPase activity"/>
    <property type="evidence" value="ECO:0007669"/>
    <property type="project" value="UniProtKB-UniRule"/>
</dbReference>
<dbReference type="GO" id="GO:0046872">
    <property type="term" value="F:metal ion binding"/>
    <property type="evidence" value="ECO:0007669"/>
    <property type="project" value="UniProtKB-KW"/>
</dbReference>
<dbReference type="GO" id="GO:0019843">
    <property type="term" value="F:rRNA binding"/>
    <property type="evidence" value="ECO:0007669"/>
    <property type="project" value="UniProtKB-KW"/>
</dbReference>
<dbReference type="GO" id="GO:0042274">
    <property type="term" value="P:ribosomal small subunit biogenesis"/>
    <property type="evidence" value="ECO:0007669"/>
    <property type="project" value="UniProtKB-UniRule"/>
</dbReference>
<dbReference type="CDD" id="cd04466">
    <property type="entry name" value="S1_YloQ_GTPase"/>
    <property type="match status" value="1"/>
</dbReference>
<dbReference type="CDD" id="cd01854">
    <property type="entry name" value="YjeQ_EngC"/>
    <property type="match status" value="1"/>
</dbReference>
<dbReference type="Gene3D" id="2.40.50.140">
    <property type="entry name" value="Nucleic acid-binding proteins"/>
    <property type="match status" value="1"/>
</dbReference>
<dbReference type="Gene3D" id="3.40.50.300">
    <property type="entry name" value="P-loop containing nucleotide triphosphate hydrolases"/>
    <property type="match status" value="1"/>
</dbReference>
<dbReference type="Gene3D" id="1.10.40.50">
    <property type="entry name" value="Probable gtpase engc, domain 3"/>
    <property type="match status" value="1"/>
</dbReference>
<dbReference type="HAMAP" id="MF_01820">
    <property type="entry name" value="GTPase_RsgA"/>
    <property type="match status" value="1"/>
</dbReference>
<dbReference type="InterPro" id="IPR030378">
    <property type="entry name" value="G_CP_dom"/>
</dbReference>
<dbReference type="InterPro" id="IPR012340">
    <property type="entry name" value="NA-bd_OB-fold"/>
</dbReference>
<dbReference type="InterPro" id="IPR027417">
    <property type="entry name" value="P-loop_NTPase"/>
</dbReference>
<dbReference type="InterPro" id="IPR004881">
    <property type="entry name" value="Ribosome_biogen_GTPase_RsgA"/>
</dbReference>
<dbReference type="InterPro" id="IPR010914">
    <property type="entry name" value="RsgA_GTPase_dom"/>
</dbReference>
<dbReference type="InterPro" id="IPR031944">
    <property type="entry name" value="RsgA_N"/>
</dbReference>
<dbReference type="NCBIfam" id="TIGR00157">
    <property type="entry name" value="ribosome small subunit-dependent GTPase A"/>
    <property type="match status" value="1"/>
</dbReference>
<dbReference type="PANTHER" id="PTHR32120">
    <property type="entry name" value="SMALL RIBOSOMAL SUBUNIT BIOGENESIS GTPASE RSGA"/>
    <property type="match status" value="1"/>
</dbReference>
<dbReference type="PANTHER" id="PTHR32120:SF11">
    <property type="entry name" value="SMALL RIBOSOMAL SUBUNIT BIOGENESIS GTPASE RSGA 1, MITOCHONDRIAL-RELATED"/>
    <property type="match status" value="1"/>
</dbReference>
<dbReference type="Pfam" id="PF03193">
    <property type="entry name" value="RsgA_GTPase"/>
    <property type="match status" value="1"/>
</dbReference>
<dbReference type="Pfam" id="PF16745">
    <property type="entry name" value="RsgA_N"/>
    <property type="match status" value="1"/>
</dbReference>
<dbReference type="SUPFAM" id="SSF50249">
    <property type="entry name" value="Nucleic acid-binding proteins"/>
    <property type="match status" value="1"/>
</dbReference>
<dbReference type="SUPFAM" id="SSF52540">
    <property type="entry name" value="P-loop containing nucleoside triphosphate hydrolases"/>
    <property type="match status" value="1"/>
</dbReference>
<dbReference type="PROSITE" id="PS50936">
    <property type="entry name" value="ENGC_GTPASE"/>
    <property type="match status" value="1"/>
</dbReference>
<dbReference type="PROSITE" id="PS51721">
    <property type="entry name" value="G_CP"/>
    <property type="match status" value="1"/>
</dbReference>
<organism>
    <name type="scientific">Porphyromonas gingivalis (strain ATCC 33277 / DSM 20709 / CIP 103683 / JCM 12257 / NCTC 11834 / 2561)</name>
    <dbReference type="NCBI Taxonomy" id="431947"/>
    <lineage>
        <taxon>Bacteria</taxon>
        <taxon>Pseudomonadati</taxon>
        <taxon>Bacteroidota</taxon>
        <taxon>Bacteroidia</taxon>
        <taxon>Bacteroidales</taxon>
        <taxon>Porphyromonadaceae</taxon>
        <taxon>Porphyromonas</taxon>
    </lineage>
</organism>
<comment type="function">
    <text evidence="1">One of several proteins that assist in the late maturation steps of the functional core of the 30S ribosomal subunit. Helps release RbfA from mature subunits. May play a role in the assembly of ribosomal proteins into the subunit. Circularly permuted GTPase that catalyzes slow GTP hydrolysis, GTPase activity is stimulated by the 30S ribosomal subunit.</text>
</comment>
<comment type="cofactor">
    <cofactor evidence="1">
        <name>Zn(2+)</name>
        <dbReference type="ChEBI" id="CHEBI:29105"/>
    </cofactor>
    <text evidence="1">Binds 1 zinc ion per subunit.</text>
</comment>
<comment type="subunit">
    <text evidence="1">Monomer. Associates with 30S ribosomal subunit, binds 16S rRNA.</text>
</comment>
<comment type="subcellular location">
    <subcellularLocation>
        <location evidence="1">Cytoplasm</location>
    </subcellularLocation>
</comment>
<comment type="similarity">
    <text evidence="1">Belongs to the TRAFAC class YlqF/YawG GTPase family. RsgA subfamily.</text>
</comment>
<accession>B2RLV5</accession>
<evidence type="ECO:0000255" key="1">
    <source>
        <dbReference type="HAMAP-Rule" id="MF_01820"/>
    </source>
</evidence>
<evidence type="ECO:0000255" key="2">
    <source>
        <dbReference type="PROSITE-ProRule" id="PRU01058"/>
    </source>
</evidence>
<reference key="1">
    <citation type="journal article" date="2008" name="DNA Res.">
        <title>Determination of the genome sequence of Porphyromonas gingivalis strain ATCC 33277 and genomic comparison with strain W83 revealed extensive genome rearrangements in P. gingivalis.</title>
        <authorList>
            <person name="Naito M."/>
            <person name="Hirakawa H."/>
            <person name="Yamashita A."/>
            <person name="Ohara N."/>
            <person name="Shoji M."/>
            <person name="Yukitake H."/>
            <person name="Nakayama K."/>
            <person name="Toh H."/>
            <person name="Yoshimura F."/>
            <person name="Kuhara S."/>
            <person name="Hattori M."/>
            <person name="Hayashi T."/>
            <person name="Nakayama K."/>
        </authorList>
    </citation>
    <scope>NUCLEOTIDE SEQUENCE [LARGE SCALE GENOMIC DNA]</scope>
    <source>
        <strain>ATCC 33277 / DSM 20709 / CIP 103683 / JCM 12257 / NCTC 11834 / 2561</strain>
    </source>
</reference>